<sequence length="94" mass="10971">MASVGERPAPVPVKDKKLLEVKLGELPSWILMRDFSPSGIFGAFQRGYYRYYNKYINVKKGSISGITMVLACYVLFSYSFSYKHLKHERLRKYH</sequence>
<evidence type="ECO:0000250" key="1"/>
<evidence type="ECO:0000250" key="2">
    <source>
        <dbReference type="UniProtKB" id="D3ZAF6"/>
    </source>
</evidence>
<evidence type="ECO:0000250" key="3">
    <source>
        <dbReference type="UniProtKB" id="P19483"/>
    </source>
</evidence>
<evidence type="ECO:0000250" key="4">
    <source>
        <dbReference type="UniProtKB" id="P56134"/>
    </source>
</evidence>
<evidence type="ECO:0000250" key="5">
    <source>
        <dbReference type="UniProtKB" id="P56135"/>
    </source>
</evidence>
<evidence type="ECO:0000305" key="6"/>
<keyword id="KW-0007">Acetylation</keyword>
<keyword id="KW-0066">ATP synthesis</keyword>
<keyword id="KW-0138">CF(0)</keyword>
<keyword id="KW-0375">Hydrogen ion transport</keyword>
<keyword id="KW-0406">Ion transport</keyword>
<keyword id="KW-0472">Membrane</keyword>
<keyword id="KW-0496">Mitochondrion</keyword>
<keyword id="KW-0999">Mitochondrion inner membrane</keyword>
<keyword id="KW-0597">Phosphoprotein</keyword>
<keyword id="KW-1185">Reference proteome</keyword>
<keyword id="KW-0812">Transmembrane</keyword>
<keyword id="KW-1133">Transmembrane helix</keyword>
<keyword id="KW-0813">Transport</keyword>
<dbReference type="EMBL" id="CR860399">
    <property type="protein sequence ID" value="CAH92525.1"/>
    <property type="molecule type" value="mRNA"/>
</dbReference>
<dbReference type="RefSeq" id="NP_001126480.1">
    <property type="nucleotide sequence ID" value="NM_001133008.2"/>
</dbReference>
<dbReference type="STRING" id="9601.ENSPPYP00000019473"/>
<dbReference type="GeneID" id="100173467"/>
<dbReference type="KEGG" id="pon:100173467"/>
<dbReference type="CTD" id="9551"/>
<dbReference type="eggNOG" id="KOG4092">
    <property type="taxonomic scope" value="Eukaryota"/>
</dbReference>
<dbReference type="InParanoid" id="Q5R6T5"/>
<dbReference type="OrthoDB" id="8921675at2759"/>
<dbReference type="Proteomes" id="UP000001595">
    <property type="component" value="Unplaced"/>
</dbReference>
<dbReference type="GO" id="GO:0005743">
    <property type="term" value="C:mitochondrial inner membrane"/>
    <property type="evidence" value="ECO:0007669"/>
    <property type="project" value="UniProtKB-SubCell"/>
</dbReference>
<dbReference type="GO" id="GO:0045259">
    <property type="term" value="C:proton-transporting ATP synthase complex"/>
    <property type="evidence" value="ECO:0000250"/>
    <property type="project" value="UniProtKB"/>
</dbReference>
<dbReference type="GO" id="GO:0046933">
    <property type="term" value="F:proton-transporting ATP synthase activity, rotational mechanism"/>
    <property type="evidence" value="ECO:0007669"/>
    <property type="project" value="TreeGrafter"/>
</dbReference>
<dbReference type="GO" id="GO:0042776">
    <property type="term" value="P:proton motive force-driven mitochondrial ATP synthesis"/>
    <property type="evidence" value="ECO:0007669"/>
    <property type="project" value="TreeGrafter"/>
</dbReference>
<dbReference type="InterPro" id="IPR019344">
    <property type="entry name" value="F1F0-ATPsyn_F_prd"/>
</dbReference>
<dbReference type="PANTHER" id="PTHR13080">
    <property type="entry name" value="ATP SYNTHASE F CHAIN, MITOCHONDRIAL-RELATED"/>
    <property type="match status" value="1"/>
</dbReference>
<dbReference type="PANTHER" id="PTHR13080:SF16">
    <property type="entry name" value="ATP SYNTHASE SUBUNIT F, MITOCHONDRIAL"/>
    <property type="match status" value="1"/>
</dbReference>
<dbReference type="Pfam" id="PF10206">
    <property type="entry name" value="WRW"/>
    <property type="match status" value="1"/>
</dbReference>
<reference key="1">
    <citation type="submission" date="2004-11" db="EMBL/GenBank/DDBJ databases">
        <authorList>
            <consortium name="The German cDNA consortium"/>
        </authorList>
    </citation>
    <scope>NUCLEOTIDE SEQUENCE [LARGE SCALE MRNA]</scope>
    <source>
        <tissue>Brain cortex</tissue>
    </source>
</reference>
<gene>
    <name evidence="4" type="primary">ATP5MF</name>
    <name type="synonym">ATP5J2</name>
</gene>
<accession>Q5R6T5</accession>
<organism>
    <name type="scientific">Pongo abelii</name>
    <name type="common">Sumatran orangutan</name>
    <name type="synonym">Pongo pygmaeus abelii</name>
    <dbReference type="NCBI Taxonomy" id="9601"/>
    <lineage>
        <taxon>Eukaryota</taxon>
        <taxon>Metazoa</taxon>
        <taxon>Chordata</taxon>
        <taxon>Craniata</taxon>
        <taxon>Vertebrata</taxon>
        <taxon>Euteleostomi</taxon>
        <taxon>Mammalia</taxon>
        <taxon>Eutheria</taxon>
        <taxon>Euarchontoglires</taxon>
        <taxon>Primates</taxon>
        <taxon>Haplorrhini</taxon>
        <taxon>Catarrhini</taxon>
        <taxon>Hominidae</taxon>
        <taxon>Pongo</taxon>
    </lineage>
</organism>
<comment type="function">
    <text evidence="3 4">Subunit f, of the mitochondrial membrane ATP synthase complex (F(1)F(0) ATP synthase or Complex V) that produces ATP from ADP in the presence of a proton gradient across the membrane which is generated by electron transport complexes of the respiratory chain. ATP synthase complex consist of a soluble F(1) head domain - the catalytic core - and a membrane F(1) domain - the membrane proton channel. These two domains are linked by a central stalk rotating inside the F(1) region and a stationary peripheral stalk. During catalysis, ATP synthesis in the catalytic domain of F(1) is coupled via a rotary mechanism of the central stalk subunits to proton translocation (By similarity). In vivo, can only synthesize ATP although its ATP hydrolase activity can be activated artificially in vitro (By similarity). Part of the complex F(0) domain (By similarity).</text>
</comment>
<comment type="subunit">
    <text evidence="4">Component of the ATP synthase complex composed at least of ATP5F1A/subunit alpha, ATP5F1B/subunit beta, ATP5MC1/subunit c (homooctomer), MT-ATP6/subunit a, MT-ATP8/subunit 8, ATP5ME/subunit e, ATP5MF/subunit f, ATP5MG/subunit g, ATP5MK/subunit k, ATP5MJ/subunit j, ATP5F1C/subunit gamma, ATP5F1D/subunit delta, ATP5F1E/subunit epsilon, ATP5PF/subunit F6, ATP5PB/subunit b, ATP5PD/subunit d, ATP5PO/subunit OSCP. ATP synthase complex consists of a soluble F(1) head domain (subunits alpha(3) and beta(3)) - the catalytic core - and a membrane F(0) domain - the membrane proton channel (subunits c, a, 8, e, f, g, k and j). These two domains are linked by a central stalk (subunits gamma, delta, and epsilon) rotating inside the F1 region and a stationary peripheral stalk (subunits F6, b, d, and OSCP).</text>
</comment>
<comment type="subcellular location">
    <subcellularLocation>
        <location evidence="1">Mitochondrion</location>
    </subcellularLocation>
    <subcellularLocation>
        <location evidence="6">Mitochondrion inner membrane</location>
        <topology evidence="6">Single-pass membrane protein</topology>
    </subcellularLocation>
</comment>
<comment type="similarity">
    <text evidence="6">Belongs to the ATPase F chain family.</text>
</comment>
<protein>
    <recommendedName>
        <fullName evidence="4">ATP synthase F(0) complex subunit f, mitochondrial</fullName>
    </recommendedName>
    <alternativeName>
        <fullName evidence="6">ATP synthase membrane subunit f</fullName>
    </alternativeName>
</protein>
<feature type="initiator methionine" description="Removed" evidence="4">
    <location>
        <position position="1"/>
    </location>
</feature>
<feature type="chain" id="PRO_0000194827" description="ATP synthase F(0) complex subunit f, mitochondrial">
    <location>
        <begin position="2"/>
        <end position="94"/>
    </location>
</feature>
<feature type="transmembrane region" description="Helical" evidence="4">
    <location>
        <begin position="68"/>
        <end position="85"/>
    </location>
</feature>
<feature type="modified residue" description="N-acetylalanine" evidence="4">
    <location>
        <position position="2"/>
    </location>
</feature>
<feature type="modified residue" description="Phosphoserine" evidence="2">
    <location>
        <position position="3"/>
    </location>
</feature>
<feature type="modified residue" description="N6-acetyllysine" evidence="5">
    <location>
        <position position="22"/>
    </location>
</feature>
<name>ATPK_PONAB</name>
<proteinExistence type="inferred from homology"/>